<name>COAE_CHLPN</name>
<dbReference type="EC" id="2.7.1.24" evidence="1"/>
<dbReference type="EMBL" id="AE001363">
    <property type="protein sequence ID" value="AAD18750.1"/>
    <property type="molecule type" value="Genomic_DNA"/>
</dbReference>
<dbReference type="EMBL" id="AE002161">
    <property type="protein sequence ID" value="AAF38019.1"/>
    <property type="molecule type" value="Genomic_DNA"/>
</dbReference>
<dbReference type="EMBL" id="BA000008">
    <property type="protein sequence ID" value="BAA98818.1"/>
    <property type="molecule type" value="Genomic_DNA"/>
</dbReference>
<dbReference type="EMBL" id="AE009440">
    <property type="protein sequence ID" value="AAP98564.1"/>
    <property type="status" value="ALT_INIT"/>
    <property type="molecule type" value="Genomic_DNA"/>
</dbReference>
<dbReference type="PIR" id="E72058">
    <property type="entry name" value="E72058"/>
</dbReference>
<dbReference type="PIR" id="H86566">
    <property type="entry name" value="H86566"/>
</dbReference>
<dbReference type="RefSeq" id="NP_224807.1">
    <property type="nucleotide sequence ID" value="NC_000922.1"/>
</dbReference>
<dbReference type="RefSeq" id="WP_010883249.1">
    <property type="nucleotide sequence ID" value="NZ_LN847257.1"/>
</dbReference>
<dbReference type="SMR" id="Q9Z7U3"/>
<dbReference type="STRING" id="406984.CPK_ORF00010"/>
<dbReference type="GeneID" id="45050659"/>
<dbReference type="KEGG" id="cpa:CP_0136"/>
<dbReference type="KEGG" id="cpj:yacE"/>
<dbReference type="KEGG" id="cpn:CPn_0611"/>
<dbReference type="KEGG" id="cpt:CpB0635"/>
<dbReference type="PATRIC" id="fig|115713.3.peg.680"/>
<dbReference type="eggNOG" id="COG0237">
    <property type="taxonomic scope" value="Bacteria"/>
</dbReference>
<dbReference type="HOGENOM" id="CLU_057180_3_1_0"/>
<dbReference type="OrthoDB" id="17745at2"/>
<dbReference type="UniPathway" id="UPA00241">
    <property type="reaction ID" value="UER00356"/>
</dbReference>
<dbReference type="Proteomes" id="UP000000583">
    <property type="component" value="Chromosome"/>
</dbReference>
<dbReference type="Proteomes" id="UP000000801">
    <property type="component" value="Chromosome"/>
</dbReference>
<dbReference type="GO" id="GO:0005737">
    <property type="term" value="C:cytoplasm"/>
    <property type="evidence" value="ECO:0007669"/>
    <property type="project" value="UniProtKB-SubCell"/>
</dbReference>
<dbReference type="GO" id="GO:0005524">
    <property type="term" value="F:ATP binding"/>
    <property type="evidence" value="ECO:0007669"/>
    <property type="project" value="UniProtKB-UniRule"/>
</dbReference>
<dbReference type="GO" id="GO:0004140">
    <property type="term" value="F:dephospho-CoA kinase activity"/>
    <property type="evidence" value="ECO:0007669"/>
    <property type="project" value="UniProtKB-UniRule"/>
</dbReference>
<dbReference type="GO" id="GO:0015937">
    <property type="term" value="P:coenzyme A biosynthetic process"/>
    <property type="evidence" value="ECO:0007669"/>
    <property type="project" value="UniProtKB-UniRule"/>
</dbReference>
<dbReference type="CDD" id="cd02022">
    <property type="entry name" value="DPCK"/>
    <property type="match status" value="1"/>
</dbReference>
<dbReference type="Gene3D" id="3.40.50.300">
    <property type="entry name" value="P-loop containing nucleotide triphosphate hydrolases"/>
    <property type="match status" value="1"/>
</dbReference>
<dbReference type="HAMAP" id="MF_00376">
    <property type="entry name" value="Dephospho_CoA_kinase"/>
    <property type="match status" value="1"/>
</dbReference>
<dbReference type="InterPro" id="IPR001977">
    <property type="entry name" value="Depp_CoAkinase"/>
</dbReference>
<dbReference type="InterPro" id="IPR027417">
    <property type="entry name" value="P-loop_NTPase"/>
</dbReference>
<dbReference type="NCBIfam" id="TIGR00152">
    <property type="entry name" value="dephospho-CoA kinase"/>
    <property type="match status" value="1"/>
</dbReference>
<dbReference type="PANTHER" id="PTHR10695:SF46">
    <property type="entry name" value="BIFUNCTIONAL COENZYME A SYNTHASE-RELATED"/>
    <property type="match status" value="1"/>
</dbReference>
<dbReference type="PANTHER" id="PTHR10695">
    <property type="entry name" value="DEPHOSPHO-COA KINASE-RELATED"/>
    <property type="match status" value="1"/>
</dbReference>
<dbReference type="Pfam" id="PF01121">
    <property type="entry name" value="CoaE"/>
    <property type="match status" value="1"/>
</dbReference>
<dbReference type="SUPFAM" id="SSF52540">
    <property type="entry name" value="P-loop containing nucleoside triphosphate hydrolases"/>
    <property type="match status" value="1"/>
</dbReference>
<dbReference type="PROSITE" id="PS51219">
    <property type="entry name" value="DPCK"/>
    <property type="match status" value="1"/>
</dbReference>
<accession>Q9Z7U3</accession>
<accession>Q9JSC9</accession>
<organism>
    <name type="scientific">Chlamydia pneumoniae</name>
    <name type="common">Chlamydophila pneumoniae</name>
    <dbReference type="NCBI Taxonomy" id="83558"/>
    <lineage>
        <taxon>Bacteria</taxon>
        <taxon>Pseudomonadati</taxon>
        <taxon>Chlamydiota</taxon>
        <taxon>Chlamydiia</taxon>
        <taxon>Chlamydiales</taxon>
        <taxon>Chlamydiaceae</taxon>
        <taxon>Chlamydia/Chlamydophila group</taxon>
        <taxon>Chlamydia</taxon>
    </lineage>
</organism>
<comment type="function">
    <text evidence="1">Catalyzes the phosphorylation of the 3'-hydroxyl group of dephosphocoenzyme A to form coenzyme A.</text>
</comment>
<comment type="catalytic activity">
    <reaction evidence="1">
        <text>3'-dephospho-CoA + ATP = ADP + CoA + H(+)</text>
        <dbReference type="Rhea" id="RHEA:18245"/>
        <dbReference type="ChEBI" id="CHEBI:15378"/>
        <dbReference type="ChEBI" id="CHEBI:30616"/>
        <dbReference type="ChEBI" id="CHEBI:57287"/>
        <dbReference type="ChEBI" id="CHEBI:57328"/>
        <dbReference type="ChEBI" id="CHEBI:456216"/>
        <dbReference type="EC" id="2.7.1.24"/>
    </reaction>
</comment>
<comment type="pathway">
    <text evidence="1">Cofactor biosynthesis; coenzyme A biosynthesis; CoA from (R)-pantothenate: step 5/5.</text>
</comment>
<comment type="subcellular location">
    <subcellularLocation>
        <location evidence="1">Cytoplasm</location>
    </subcellularLocation>
</comment>
<comment type="similarity">
    <text evidence="1 2">Belongs to the CoaE family.</text>
</comment>
<comment type="sequence caution" evidence="2">
    <conflict type="erroneous initiation">
        <sequence resource="EMBL-CDS" id="AAP98564"/>
    </conflict>
</comment>
<proteinExistence type="inferred from homology"/>
<evidence type="ECO:0000255" key="1">
    <source>
        <dbReference type="HAMAP-Rule" id="MF_00376"/>
    </source>
</evidence>
<evidence type="ECO:0000305" key="2"/>
<gene>
    <name evidence="1" type="primary">coaE</name>
    <name type="ordered locus">CPn_0611</name>
    <name type="ordered locus">CP_0136</name>
    <name type="ordered locus">CpB0635</name>
</gene>
<keyword id="KW-0067">ATP-binding</keyword>
<keyword id="KW-0173">Coenzyme A biosynthesis</keyword>
<keyword id="KW-0963">Cytoplasm</keyword>
<keyword id="KW-0418">Kinase</keyword>
<keyword id="KW-0547">Nucleotide-binding</keyword>
<keyword id="KW-0808">Transferase</keyword>
<sequence length="202" mass="22913">MLKLLKVSITGDLSSGKTEACQVFQELGAYVVSADEISHSFLIPHTRIGRRVIDLLGSDVVVDGAFDAQAIAAKVFYNSVLLQGLEAILHPEVCRIIEEQYHQSIQDGNYPLFVAEVPLLYEIHYAKWFDSVILVMANEDIRRERFMKKTGRSSEDFDQRCSRFLNVEEKLAQADVVVENNGTKKELHQKIEEYFYALKGAL</sequence>
<feature type="chain" id="PRO_0000172926" description="Dephospho-CoA kinase">
    <location>
        <begin position="1"/>
        <end position="202"/>
    </location>
</feature>
<feature type="domain" description="DPCK" evidence="1">
    <location>
        <begin position="6"/>
        <end position="202"/>
    </location>
</feature>
<feature type="binding site" evidence="1">
    <location>
        <begin position="14"/>
        <end position="19"/>
    </location>
    <ligand>
        <name>ATP</name>
        <dbReference type="ChEBI" id="CHEBI:30616"/>
    </ligand>
</feature>
<feature type="sequence conflict" description="In Ref. 3; BAA98818." evidence="2" ref="3">
    <original>H</original>
    <variation>N</variation>
    <location>
        <position position="39"/>
    </location>
</feature>
<feature type="sequence conflict" description="In Ref. 3; BAA98818." evidence="2" ref="3">
    <original>F</original>
    <variation>Y</variation>
    <location>
        <position position="66"/>
    </location>
</feature>
<reference key="1">
    <citation type="journal article" date="1999" name="Nat. Genet.">
        <title>Comparative genomes of Chlamydia pneumoniae and C. trachomatis.</title>
        <authorList>
            <person name="Kalman S."/>
            <person name="Mitchell W.P."/>
            <person name="Marathe R."/>
            <person name="Lammel C.J."/>
            <person name="Fan J."/>
            <person name="Hyman R.W."/>
            <person name="Olinger L."/>
            <person name="Grimwood J."/>
            <person name="Davis R.W."/>
            <person name="Stephens R.S."/>
        </authorList>
    </citation>
    <scope>NUCLEOTIDE SEQUENCE [LARGE SCALE GENOMIC DNA]</scope>
    <source>
        <strain>CWL029</strain>
    </source>
</reference>
<reference key="2">
    <citation type="journal article" date="2000" name="Nucleic Acids Res.">
        <title>Genome sequences of Chlamydia trachomatis MoPn and Chlamydia pneumoniae AR39.</title>
        <authorList>
            <person name="Read T.D."/>
            <person name="Brunham R.C."/>
            <person name="Shen C."/>
            <person name="Gill S.R."/>
            <person name="Heidelberg J.F."/>
            <person name="White O."/>
            <person name="Hickey E.K."/>
            <person name="Peterson J.D."/>
            <person name="Utterback T.R."/>
            <person name="Berry K.J."/>
            <person name="Bass S."/>
            <person name="Linher K.D."/>
            <person name="Weidman J.F."/>
            <person name="Khouri H.M."/>
            <person name="Craven B."/>
            <person name="Bowman C."/>
            <person name="Dodson R.J."/>
            <person name="Gwinn M.L."/>
            <person name="Nelson W.C."/>
            <person name="DeBoy R.T."/>
            <person name="Kolonay J.F."/>
            <person name="McClarty G."/>
            <person name="Salzberg S.L."/>
            <person name="Eisen J.A."/>
            <person name="Fraser C.M."/>
        </authorList>
    </citation>
    <scope>NUCLEOTIDE SEQUENCE [LARGE SCALE GENOMIC DNA]</scope>
    <source>
        <strain>AR39</strain>
    </source>
</reference>
<reference key="3">
    <citation type="journal article" date="2000" name="Nucleic Acids Res.">
        <title>Comparison of whole genome sequences of Chlamydia pneumoniae J138 from Japan and CWL029 from USA.</title>
        <authorList>
            <person name="Shirai M."/>
            <person name="Hirakawa H."/>
            <person name="Kimoto M."/>
            <person name="Tabuchi M."/>
            <person name="Kishi F."/>
            <person name="Ouchi K."/>
            <person name="Shiba T."/>
            <person name="Ishii K."/>
            <person name="Hattori M."/>
            <person name="Kuhara S."/>
            <person name="Nakazawa T."/>
        </authorList>
    </citation>
    <scope>NUCLEOTIDE SEQUENCE [LARGE SCALE GENOMIC DNA]</scope>
    <source>
        <strain>J138</strain>
    </source>
</reference>
<reference key="4">
    <citation type="submission" date="2002-05" db="EMBL/GenBank/DDBJ databases">
        <title>The genome sequence of Chlamydia pneumoniae TW183 and comparison with other Chlamydia strains based on whole genome sequence analysis.</title>
        <authorList>
            <person name="Geng M.M."/>
            <person name="Schuhmacher A."/>
            <person name="Muehldorfer I."/>
            <person name="Bensch K.W."/>
            <person name="Schaefer K.P."/>
            <person name="Schneider S."/>
            <person name="Pohl T."/>
            <person name="Essig A."/>
            <person name="Marre R."/>
            <person name="Melchers K."/>
        </authorList>
    </citation>
    <scope>NUCLEOTIDE SEQUENCE [LARGE SCALE GENOMIC DNA]</scope>
    <source>
        <strain>TW-183</strain>
    </source>
</reference>
<protein>
    <recommendedName>
        <fullName evidence="1">Dephospho-CoA kinase</fullName>
        <ecNumber evidence="1">2.7.1.24</ecNumber>
    </recommendedName>
    <alternativeName>
        <fullName evidence="1">Dephosphocoenzyme A kinase</fullName>
    </alternativeName>
</protein>